<comment type="function">
    <text evidence="1">Structural component of heterochromatin, involved in gene repression and the modification of position-effect-variegation. Recognizes and binds histone H3 tails methylated at 'Lys-9', leading to epigenetic repression (By similarity).</text>
</comment>
<comment type="subcellular location">
    <subcellularLocation>
        <location>Nucleus</location>
    </subcellularLocation>
</comment>
<feature type="chain" id="PRO_0000080198" description="Heterochromatin protein 1">
    <location>
        <begin position="1"/>
        <end position="213"/>
    </location>
</feature>
<feature type="domain" description="Chromo 1" evidence="2">
    <location>
        <begin position="24"/>
        <end position="82"/>
    </location>
</feature>
<feature type="domain" description="Chromo 2" evidence="2">
    <location>
        <begin position="154"/>
        <end position="212"/>
    </location>
</feature>
<feature type="region of interest" description="Disordered" evidence="3">
    <location>
        <begin position="1"/>
        <end position="24"/>
    </location>
</feature>
<feature type="region of interest" description="Disordered" evidence="3">
    <location>
        <begin position="74"/>
        <end position="151"/>
    </location>
</feature>
<feature type="compositionally biased region" description="Basic and acidic residues" evidence="3">
    <location>
        <begin position="89"/>
        <end position="104"/>
    </location>
</feature>
<feature type="compositionally biased region" description="Polar residues" evidence="3">
    <location>
        <begin position="105"/>
        <end position="115"/>
    </location>
</feature>
<protein>
    <recommendedName>
        <fullName>Heterochromatin protein 1</fullName>
        <shortName>HP1</shortName>
    </recommendedName>
</protein>
<organism>
    <name type="scientific">Drosophila virilis</name>
    <name type="common">Fruit fly</name>
    <dbReference type="NCBI Taxonomy" id="7244"/>
    <lineage>
        <taxon>Eukaryota</taxon>
        <taxon>Metazoa</taxon>
        <taxon>Ecdysozoa</taxon>
        <taxon>Arthropoda</taxon>
        <taxon>Hexapoda</taxon>
        <taxon>Insecta</taxon>
        <taxon>Pterygota</taxon>
        <taxon>Neoptera</taxon>
        <taxon>Endopterygota</taxon>
        <taxon>Diptera</taxon>
        <taxon>Brachycera</taxon>
        <taxon>Muscomorpha</taxon>
        <taxon>Ephydroidea</taxon>
        <taxon>Drosophilidae</taxon>
        <taxon>Drosophila</taxon>
    </lineage>
</organism>
<evidence type="ECO:0000250" key="1"/>
<evidence type="ECO:0000255" key="2">
    <source>
        <dbReference type="PROSITE-ProRule" id="PRU00053"/>
    </source>
</evidence>
<evidence type="ECO:0000256" key="3">
    <source>
        <dbReference type="SAM" id="MobiDB-lite"/>
    </source>
</evidence>
<proteinExistence type="inferred from homology"/>
<keyword id="KW-0156">Chromatin regulator</keyword>
<keyword id="KW-0539">Nucleus</keyword>
<keyword id="KW-1185">Reference proteome</keyword>
<keyword id="KW-0677">Repeat</keyword>
<keyword id="KW-0678">Repressor</keyword>
<keyword id="KW-0804">Transcription</keyword>
<keyword id="KW-0805">Transcription regulation</keyword>
<accession>P29227</accession>
<accession>B4LUB7</accession>
<name>HP1_DROVI</name>
<reference key="1">
    <citation type="journal article" date="1992" name="Nucleic Acids Res.">
        <title>Heterochromatin protein 1, a known suppressor of position-effect variegation, is highly conserved in Drosophila.</title>
        <authorList>
            <person name="Clark R.F."/>
            <person name="Elgin S.C.R."/>
        </authorList>
    </citation>
    <scope>NUCLEOTIDE SEQUENCE [GENOMIC DNA]</scope>
</reference>
<reference key="2">
    <citation type="journal article" date="2007" name="Nature">
        <title>Evolution of genes and genomes on the Drosophila phylogeny.</title>
        <authorList>
            <consortium name="Drosophila 12 genomes consortium"/>
        </authorList>
    </citation>
    <scope>NUCLEOTIDE SEQUENCE [LARGE SCALE GENOMIC DNA]</scope>
    <source>
        <strain>Tucson 15010-1051.87</strain>
    </source>
</reference>
<gene>
    <name type="primary">HP1A</name>
    <name type="synonym">HP1</name>
    <name type="synonym">Su(var)205</name>
    <name type="ORF">GJ17281</name>
</gene>
<sequence length="213" mass="23452">MGKKTDNPETNNASSGAEEEEEEYAVEKILDRRVRKGKVEYYLKWKGYAETENTWEPEGNLDCQDLIQQYELSRKDEANAAASSSSSSSKKERPGSSTKVKETGRTSTTASNSSGSKRKSEEPAGPAGSKSKRVESEDTGDIVPAGGTGFDRGLEAEKILGASDNNGRLTFLIQFKGVDQAEMVPSTVANVKIPQMVIRFYEERLSWYSDNED</sequence>
<dbReference type="EMBL" id="M88753">
    <property type="protein sequence ID" value="AAB00733.1"/>
    <property type="molecule type" value="Genomic_DNA"/>
</dbReference>
<dbReference type="EMBL" id="CH940649">
    <property type="protein sequence ID" value="EDW64103.1"/>
    <property type="molecule type" value="Genomic_DNA"/>
</dbReference>
<dbReference type="PIR" id="S35522">
    <property type="entry name" value="S35522"/>
</dbReference>
<dbReference type="RefSeq" id="XP_002051948.1">
    <property type="nucleotide sequence ID" value="XM_002051912.2"/>
</dbReference>
<dbReference type="SMR" id="P29227"/>
<dbReference type="FunCoup" id="P29227">
    <property type="interactions" value="187"/>
</dbReference>
<dbReference type="STRING" id="7244.P29227"/>
<dbReference type="EnsemblMetazoa" id="FBtr0233206">
    <property type="protein sequence ID" value="FBpp0231698"/>
    <property type="gene ID" value="FBgn0013097"/>
</dbReference>
<dbReference type="EnsemblMetazoa" id="XM_002051912.3">
    <property type="protein sequence ID" value="XP_002051948.1"/>
    <property type="gene ID" value="LOC6627672"/>
</dbReference>
<dbReference type="GeneID" id="6627672"/>
<dbReference type="KEGG" id="dvi:6627672"/>
<dbReference type="CTD" id="34119"/>
<dbReference type="eggNOG" id="KOG1911">
    <property type="taxonomic scope" value="Eukaryota"/>
</dbReference>
<dbReference type="HOGENOM" id="CLU_045874_1_1_1"/>
<dbReference type="InParanoid" id="P29227"/>
<dbReference type="OMA" id="WKGYADT"/>
<dbReference type="OrthoDB" id="433924at2759"/>
<dbReference type="PhylomeDB" id="P29227"/>
<dbReference type="CD-CODE" id="DFEC0B67">
    <property type="entry name" value="Heterochromatin"/>
</dbReference>
<dbReference type="ChiTaRS" id="Su(var)205">
    <property type="organism name" value="fly"/>
</dbReference>
<dbReference type="Proteomes" id="UP000008792">
    <property type="component" value="Unassembled WGS sequence"/>
</dbReference>
<dbReference type="GO" id="GO:0000792">
    <property type="term" value="C:heterochromatin"/>
    <property type="evidence" value="ECO:0007669"/>
    <property type="project" value="UniProtKB-ARBA"/>
</dbReference>
<dbReference type="GO" id="GO:0005634">
    <property type="term" value="C:nucleus"/>
    <property type="evidence" value="ECO:0007669"/>
    <property type="project" value="UniProtKB-SubCell"/>
</dbReference>
<dbReference type="GO" id="GO:0006325">
    <property type="term" value="P:chromatin organization"/>
    <property type="evidence" value="ECO:0007669"/>
    <property type="project" value="UniProtKB-KW"/>
</dbReference>
<dbReference type="CDD" id="cd18653">
    <property type="entry name" value="CD_HP1a_insect"/>
    <property type="match status" value="1"/>
</dbReference>
<dbReference type="CDD" id="cd18658">
    <property type="entry name" value="CSD_HP1a_insect"/>
    <property type="match status" value="1"/>
</dbReference>
<dbReference type="FunFam" id="2.40.50.40:FF:000007">
    <property type="entry name" value="Chromobox protein homolog 1"/>
    <property type="match status" value="1"/>
</dbReference>
<dbReference type="FunFam" id="2.40.50.40:FF:000031">
    <property type="entry name" value="Heterochromatin protein 1"/>
    <property type="match status" value="1"/>
</dbReference>
<dbReference type="Gene3D" id="2.40.50.40">
    <property type="match status" value="2"/>
</dbReference>
<dbReference type="InterPro" id="IPR016197">
    <property type="entry name" value="Chromo-like_dom_sf"/>
</dbReference>
<dbReference type="InterPro" id="IPR000953">
    <property type="entry name" value="Chromo/chromo_shadow_dom"/>
</dbReference>
<dbReference type="InterPro" id="IPR017984">
    <property type="entry name" value="Chromo_dom_subgr"/>
</dbReference>
<dbReference type="InterPro" id="IPR023780">
    <property type="entry name" value="Chromo_domain"/>
</dbReference>
<dbReference type="InterPro" id="IPR008251">
    <property type="entry name" value="Chromo_shadow_dom"/>
</dbReference>
<dbReference type="InterPro" id="IPR023779">
    <property type="entry name" value="Chromodomain_CS"/>
</dbReference>
<dbReference type="InterPro" id="IPR051219">
    <property type="entry name" value="Heterochromatin_chromo-domain"/>
</dbReference>
<dbReference type="PANTHER" id="PTHR22812">
    <property type="entry name" value="CHROMOBOX PROTEIN"/>
    <property type="match status" value="1"/>
</dbReference>
<dbReference type="Pfam" id="PF00385">
    <property type="entry name" value="Chromo"/>
    <property type="match status" value="1"/>
</dbReference>
<dbReference type="Pfam" id="PF01393">
    <property type="entry name" value="Chromo_shadow"/>
    <property type="match status" value="1"/>
</dbReference>
<dbReference type="PRINTS" id="PR00504">
    <property type="entry name" value="CHROMODOMAIN"/>
</dbReference>
<dbReference type="SMART" id="SM00298">
    <property type="entry name" value="CHROMO"/>
    <property type="match status" value="2"/>
</dbReference>
<dbReference type="SMART" id="SM00300">
    <property type="entry name" value="ChSh"/>
    <property type="match status" value="1"/>
</dbReference>
<dbReference type="SUPFAM" id="SSF54160">
    <property type="entry name" value="Chromo domain-like"/>
    <property type="match status" value="2"/>
</dbReference>
<dbReference type="PROSITE" id="PS00598">
    <property type="entry name" value="CHROMO_1"/>
    <property type="match status" value="1"/>
</dbReference>
<dbReference type="PROSITE" id="PS50013">
    <property type="entry name" value="CHROMO_2"/>
    <property type="match status" value="2"/>
</dbReference>